<evidence type="ECO:0000255" key="1">
    <source>
        <dbReference type="HAMAP-Rule" id="MF_01011"/>
    </source>
</evidence>
<evidence type="ECO:0000305" key="2"/>
<feature type="chain" id="PRO_0000388551" description="tRNA/tmRNA (uracil-C(5))-methyltransferase">
    <location>
        <begin position="1"/>
        <end position="366"/>
    </location>
</feature>
<feature type="active site" description="Nucleophile" evidence="1">
    <location>
        <position position="324"/>
    </location>
</feature>
<feature type="active site" description="Proton acceptor" evidence="1">
    <location>
        <position position="358"/>
    </location>
</feature>
<feature type="binding site" evidence="1">
    <location>
        <position position="190"/>
    </location>
    <ligand>
        <name>S-adenosyl-L-methionine</name>
        <dbReference type="ChEBI" id="CHEBI:59789"/>
    </ligand>
</feature>
<feature type="binding site" evidence="1">
    <location>
        <position position="218"/>
    </location>
    <ligand>
        <name>S-adenosyl-L-methionine</name>
        <dbReference type="ChEBI" id="CHEBI:59789"/>
    </ligand>
</feature>
<feature type="binding site" evidence="1">
    <location>
        <position position="223"/>
    </location>
    <ligand>
        <name>S-adenosyl-L-methionine</name>
        <dbReference type="ChEBI" id="CHEBI:59789"/>
    </ligand>
</feature>
<feature type="binding site" evidence="1">
    <location>
        <position position="239"/>
    </location>
    <ligand>
        <name>S-adenosyl-L-methionine</name>
        <dbReference type="ChEBI" id="CHEBI:59789"/>
    </ligand>
</feature>
<feature type="binding site" evidence="1">
    <location>
        <position position="299"/>
    </location>
    <ligand>
        <name>S-adenosyl-L-methionine</name>
        <dbReference type="ChEBI" id="CHEBI:59789"/>
    </ligand>
</feature>
<name>TRMA_CELJU</name>
<protein>
    <recommendedName>
        <fullName evidence="1">tRNA/tmRNA (uracil-C(5))-methyltransferase</fullName>
        <ecNumber evidence="1">2.1.1.-</ecNumber>
        <ecNumber evidence="1">2.1.1.35</ecNumber>
    </recommendedName>
    <alternativeName>
        <fullName evidence="1">tRNA (uracil(54)-C(5))-methyltransferase</fullName>
    </alternativeName>
    <alternativeName>
        <fullName evidence="1">tRNA(m5U54)-methyltransferase</fullName>
        <shortName evidence="1">RUMT</shortName>
    </alternativeName>
    <alternativeName>
        <fullName evidence="1">tmRNA (uracil(341)-C(5))-methyltransferase</fullName>
    </alternativeName>
</protein>
<comment type="function">
    <text evidence="1">Dual-specificity methyltransferase that catalyzes the formation of 5-methyluridine at position 54 (m5U54) in all tRNAs, and that of position 341 (m5U341) in tmRNA (transfer-mRNA).</text>
</comment>
<comment type="catalytic activity">
    <reaction evidence="1">
        <text>uridine(54) in tRNA + S-adenosyl-L-methionine = 5-methyluridine(54) in tRNA + S-adenosyl-L-homocysteine + H(+)</text>
        <dbReference type="Rhea" id="RHEA:42712"/>
        <dbReference type="Rhea" id="RHEA-COMP:10167"/>
        <dbReference type="Rhea" id="RHEA-COMP:10193"/>
        <dbReference type="ChEBI" id="CHEBI:15378"/>
        <dbReference type="ChEBI" id="CHEBI:57856"/>
        <dbReference type="ChEBI" id="CHEBI:59789"/>
        <dbReference type="ChEBI" id="CHEBI:65315"/>
        <dbReference type="ChEBI" id="CHEBI:74447"/>
        <dbReference type="EC" id="2.1.1.35"/>
    </reaction>
</comment>
<comment type="catalytic activity">
    <reaction evidence="1">
        <text>uridine(341) in tmRNA + S-adenosyl-L-methionine = 5-methyluridine(341) in tmRNA + S-adenosyl-L-homocysteine + H(+)</text>
        <dbReference type="Rhea" id="RHEA:43612"/>
        <dbReference type="Rhea" id="RHEA-COMP:10630"/>
        <dbReference type="Rhea" id="RHEA-COMP:10631"/>
        <dbReference type="ChEBI" id="CHEBI:15378"/>
        <dbReference type="ChEBI" id="CHEBI:57856"/>
        <dbReference type="ChEBI" id="CHEBI:59789"/>
        <dbReference type="ChEBI" id="CHEBI:65315"/>
        <dbReference type="ChEBI" id="CHEBI:74447"/>
    </reaction>
</comment>
<comment type="similarity">
    <text evidence="1">Belongs to the class I-like SAM-binding methyltransferase superfamily. RNA M5U methyltransferase family. TrmA subfamily.</text>
</comment>
<comment type="sequence caution" evidence="2">
    <conflict type="erroneous initiation">
        <sequence resource="EMBL-CDS" id="ACE83625"/>
    </conflict>
    <text>Extended N-terminus.</text>
</comment>
<gene>
    <name evidence="1" type="primary">trmA</name>
    <name type="ordered locus">CJA_2186</name>
</gene>
<keyword id="KW-0489">Methyltransferase</keyword>
<keyword id="KW-1185">Reference proteome</keyword>
<keyword id="KW-0949">S-adenosyl-L-methionine</keyword>
<keyword id="KW-0808">Transferase</keyword>
<keyword id="KW-0819">tRNA processing</keyword>
<reference key="1">
    <citation type="journal article" date="2008" name="J. Bacteriol.">
        <title>Insights into plant cell wall degradation from the genome sequence of the soil bacterium Cellvibrio japonicus.</title>
        <authorList>
            <person name="DeBoy R.T."/>
            <person name="Mongodin E.F."/>
            <person name="Fouts D.E."/>
            <person name="Tailford L.E."/>
            <person name="Khouri H."/>
            <person name="Emerson J.B."/>
            <person name="Mohamoud Y."/>
            <person name="Watkins K."/>
            <person name="Henrissat B."/>
            <person name="Gilbert H.J."/>
            <person name="Nelson K.E."/>
        </authorList>
    </citation>
    <scope>NUCLEOTIDE SEQUENCE [LARGE SCALE GENOMIC DNA]</scope>
    <source>
        <strain>Ueda107</strain>
    </source>
</reference>
<organism>
    <name type="scientific">Cellvibrio japonicus (strain Ueda107)</name>
    <name type="common">Pseudomonas fluorescens subsp. cellulosa</name>
    <dbReference type="NCBI Taxonomy" id="498211"/>
    <lineage>
        <taxon>Bacteria</taxon>
        <taxon>Pseudomonadati</taxon>
        <taxon>Pseudomonadota</taxon>
        <taxon>Gammaproteobacteria</taxon>
        <taxon>Cellvibrionales</taxon>
        <taxon>Cellvibrionaceae</taxon>
        <taxon>Cellvibrio</taxon>
    </lineage>
</organism>
<accession>B3PJ74</accession>
<dbReference type="EC" id="2.1.1.-" evidence="1"/>
<dbReference type="EC" id="2.1.1.35" evidence="1"/>
<dbReference type="EMBL" id="CP000934">
    <property type="protein sequence ID" value="ACE83625.1"/>
    <property type="status" value="ALT_INIT"/>
    <property type="molecule type" value="Genomic_DNA"/>
</dbReference>
<dbReference type="RefSeq" id="WP_041551444.1">
    <property type="nucleotide sequence ID" value="NC_010995.1"/>
</dbReference>
<dbReference type="SMR" id="B3PJ74"/>
<dbReference type="STRING" id="498211.CJA_2186"/>
<dbReference type="KEGG" id="cja:CJA_2186"/>
<dbReference type="eggNOG" id="COG2265">
    <property type="taxonomic scope" value="Bacteria"/>
</dbReference>
<dbReference type="HOGENOM" id="CLU_043022_0_0_6"/>
<dbReference type="OrthoDB" id="9804590at2"/>
<dbReference type="Proteomes" id="UP000001036">
    <property type="component" value="Chromosome"/>
</dbReference>
<dbReference type="GO" id="GO:0005829">
    <property type="term" value="C:cytosol"/>
    <property type="evidence" value="ECO:0007669"/>
    <property type="project" value="TreeGrafter"/>
</dbReference>
<dbReference type="GO" id="GO:0019843">
    <property type="term" value="F:rRNA binding"/>
    <property type="evidence" value="ECO:0007669"/>
    <property type="project" value="TreeGrafter"/>
</dbReference>
<dbReference type="GO" id="GO:0030697">
    <property type="term" value="F:tRNA (uracil(54)-C5)-methyltransferase activity, S-adenosyl methionine-dependent"/>
    <property type="evidence" value="ECO:0007669"/>
    <property type="project" value="UniProtKB-UniRule"/>
</dbReference>
<dbReference type="GO" id="GO:0000049">
    <property type="term" value="F:tRNA binding"/>
    <property type="evidence" value="ECO:0007669"/>
    <property type="project" value="TreeGrafter"/>
</dbReference>
<dbReference type="GO" id="GO:0030488">
    <property type="term" value="P:tRNA methylation"/>
    <property type="evidence" value="ECO:0007669"/>
    <property type="project" value="UniProtKB-UniRule"/>
</dbReference>
<dbReference type="CDD" id="cd02440">
    <property type="entry name" value="AdoMet_MTases"/>
    <property type="match status" value="1"/>
</dbReference>
<dbReference type="FunFam" id="2.40.50.1070:FF:000001">
    <property type="entry name" value="tRNA/tmRNA (uracil-C(5))-methyltransferase"/>
    <property type="match status" value="1"/>
</dbReference>
<dbReference type="FunFam" id="3.40.50.150:FF:000012">
    <property type="entry name" value="tRNA/tmRNA (uracil-C(5))-methyltransferase"/>
    <property type="match status" value="1"/>
</dbReference>
<dbReference type="Gene3D" id="2.40.50.1070">
    <property type="match status" value="1"/>
</dbReference>
<dbReference type="Gene3D" id="3.40.50.150">
    <property type="entry name" value="Vaccinia Virus protein VP39"/>
    <property type="match status" value="1"/>
</dbReference>
<dbReference type="HAMAP" id="MF_01011">
    <property type="entry name" value="RNA_methyltr_TrmA"/>
    <property type="match status" value="1"/>
</dbReference>
<dbReference type="InterPro" id="IPR030390">
    <property type="entry name" value="MeTrfase_TrmA_AS"/>
</dbReference>
<dbReference type="InterPro" id="IPR030391">
    <property type="entry name" value="MeTrfase_TrmA_CS"/>
</dbReference>
<dbReference type="InterPro" id="IPR029063">
    <property type="entry name" value="SAM-dependent_MTases_sf"/>
</dbReference>
<dbReference type="InterPro" id="IPR011869">
    <property type="entry name" value="TrmA_MeTrfase"/>
</dbReference>
<dbReference type="InterPro" id="IPR010280">
    <property type="entry name" value="U5_MeTrfase_fam"/>
</dbReference>
<dbReference type="NCBIfam" id="TIGR02143">
    <property type="entry name" value="trmA_only"/>
    <property type="match status" value="1"/>
</dbReference>
<dbReference type="PANTHER" id="PTHR47790">
    <property type="entry name" value="TRNA/TMRNA (URACIL-C(5))-METHYLTRANSFERASE"/>
    <property type="match status" value="1"/>
</dbReference>
<dbReference type="PANTHER" id="PTHR47790:SF2">
    <property type="entry name" value="TRNA_TMRNA (URACIL-C(5))-METHYLTRANSFERASE"/>
    <property type="match status" value="1"/>
</dbReference>
<dbReference type="Pfam" id="PF05958">
    <property type="entry name" value="tRNA_U5-meth_tr"/>
    <property type="match status" value="1"/>
</dbReference>
<dbReference type="SUPFAM" id="SSF53335">
    <property type="entry name" value="S-adenosyl-L-methionine-dependent methyltransferases"/>
    <property type="match status" value="1"/>
</dbReference>
<dbReference type="PROSITE" id="PS51687">
    <property type="entry name" value="SAM_MT_RNA_M5U"/>
    <property type="match status" value="1"/>
</dbReference>
<dbReference type="PROSITE" id="PS01230">
    <property type="entry name" value="TRMA_1"/>
    <property type="match status" value="1"/>
</dbReference>
<dbReference type="PROSITE" id="PS01231">
    <property type="entry name" value="TRMA_2"/>
    <property type="match status" value="1"/>
</dbReference>
<proteinExistence type="inferred from homology"/>
<sequence length="366" mass="42751">MPQPQQHTADYSSAAYEAQLQQKLIRLNQDFASFNLPEISVFRSPEKHFRMRTEFRIWHERGTAMYVMFSQTDKRPYPIREFPIGSERINQLMPELMALVNRHECLRHKLFQVEFLTSLSNQALITLVYHKPLDEEWISAATDLRKQLNVEIIGRSRKQKILLERDHIIECLKVNGREYRYQQVEGSFTQPNARVCEQMLSWAQEQTRHTGGDLLELYCGNGNFTLPLAQNFDRVLATEISKTSVDSALYNSRLNQVENLQIARMSSEEFTQAMDGVREFNRLKHISLNDYRFSTIFVDPPRAGLDPATCHLAQRFDNIVYISCNPETLKDNLQTLTQTHQICTFAAFDQFPYTHHLECGVLLQRR</sequence>